<feature type="chain" id="PRO_0000113333" description="Malate dehydrogenase">
    <location>
        <begin position="1"/>
        <end position="310"/>
    </location>
</feature>
<feature type="active site" description="Proton acceptor" evidence="1">
    <location>
        <position position="177"/>
    </location>
</feature>
<feature type="binding site" evidence="1">
    <location>
        <begin position="7"/>
        <end position="13"/>
    </location>
    <ligand>
        <name>NAD(+)</name>
        <dbReference type="ChEBI" id="CHEBI:57540"/>
    </ligand>
</feature>
<feature type="binding site" evidence="1">
    <location>
        <position position="34"/>
    </location>
    <ligand>
        <name>NAD(+)</name>
        <dbReference type="ChEBI" id="CHEBI:57540"/>
    </ligand>
</feature>
<feature type="binding site" evidence="1">
    <location>
        <position position="81"/>
    </location>
    <ligand>
        <name>substrate</name>
    </ligand>
</feature>
<feature type="binding site" evidence="1">
    <location>
        <position position="87"/>
    </location>
    <ligand>
        <name>substrate</name>
    </ligand>
</feature>
<feature type="binding site" evidence="1">
    <location>
        <position position="94"/>
    </location>
    <ligand>
        <name>NAD(+)</name>
        <dbReference type="ChEBI" id="CHEBI:57540"/>
    </ligand>
</feature>
<feature type="binding site" evidence="1">
    <location>
        <begin position="117"/>
        <end position="119"/>
    </location>
    <ligand>
        <name>NAD(+)</name>
        <dbReference type="ChEBI" id="CHEBI:57540"/>
    </ligand>
</feature>
<feature type="binding site" evidence="1">
    <location>
        <position position="119"/>
    </location>
    <ligand>
        <name>substrate</name>
    </ligand>
</feature>
<feature type="binding site" evidence="1">
    <location>
        <position position="153"/>
    </location>
    <ligand>
        <name>substrate</name>
    </ligand>
</feature>
<feature type="binding site" evidence="1">
    <location>
        <position position="227"/>
    </location>
    <ligand>
        <name>NAD(+)</name>
        <dbReference type="ChEBI" id="CHEBI:57540"/>
    </ligand>
</feature>
<feature type="strand" evidence="2">
    <location>
        <begin position="2"/>
        <end position="6"/>
    </location>
</feature>
<feature type="turn" evidence="2">
    <location>
        <begin position="7"/>
        <end position="9"/>
    </location>
</feature>
<feature type="helix" evidence="2">
    <location>
        <begin position="11"/>
        <end position="23"/>
    </location>
</feature>
<feature type="strand" evidence="2">
    <location>
        <begin position="29"/>
        <end position="36"/>
    </location>
</feature>
<feature type="helix" evidence="2">
    <location>
        <begin position="39"/>
        <end position="47"/>
    </location>
</feature>
<feature type="strand" evidence="2">
    <location>
        <begin position="54"/>
        <end position="61"/>
    </location>
</feature>
<feature type="helix" evidence="2">
    <location>
        <begin position="64"/>
        <end position="67"/>
    </location>
</feature>
<feature type="strand" evidence="2">
    <location>
        <begin position="71"/>
        <end position="75"/>
    </location>
</feature>
<feature type="helix" evidence="2">
    <location>
        <begin position="88"/>
        <end position="108"/>
    </location>
</feature>
<feature type="strand" evidence="2">
    <location>
        <begin position="112"/>
        <end position="116"/>
    </location>
</feature>
<feature type="helix" evidence="2">
    <location>
        <begin position="121"/>
        <end position="134"/>
    </location>
</feature>
<feature type="strand" evidence="2">
    <location>
        <begin position="142"/>
        <end position="145"/>
    </location>
</feature>
<feature type="helix" evidence="2">
    <location>
        <begin position="148"/>
        <end position="161"/>
    </location>
</feature>
<feature type="turn" evidence="2">
    <location>
        <begin position="166"/>
        <end position="168"/>
    </location>
</feature>
<feature type="strand" evidence="2">
    <location>
        <begin position="173"/>
        <end position="175"/>
    </location>
</feature>
<feature type="helix" evidence="2">
    <location>
        <begin position="179"/>
        <end position="181"/>
    </location>
</feature>
<feature type="strand" evidence="2">
    <location>
        <begin position="182"/>
        <end position="184"/>
    </location>
</feature>
<feature type="helix" evidence="2">
    <location>
        <begin position="186"/>
        <end position="188"/>
    </location>
</feature>
<feature type="helix" evidence="2">
    <location>
        <begin position="196"/>
        <end position="207"/>
    </location>
</feature>
<feature type="helix" evidence="2">
    <location>
        <begin position="209"/>
        <end position="216"/>
    </location>
</feature>
<feature type="turn" evidence="2">
    <location>
        <begin position="217"/>
        <end position="219"/>
    </location>
</feature>
<feature type="helix" evidence="2">
    <location>
        <begin position="225"/>
        <end position="242"/>
    </location>
</feature>
<feature type="strand" evidence="2">
    <location>
        <begin position="247"/>
        <end position="254"/>
    </location>
</feature>
<feature type="strand" evidence="2">
    <location>
        <begin position="261"/>
        <end position="270"/>
    </location>
</feature>
<feature type="strand" evidence="2">
    <location>
        <begin position="273"/>
        <end position="277"/>
    </location>
</feature>
<feature type="helix" evidence="2">
    <location>
        <begin position="285"/>
        <end position="308"/>
    </location>
</feature>
<sequence length="310" mass="32168">MKVAVIGAAGGIGQALALLLKNRLPAGSDLALYDIAPVTPGVAADLSHIPTHVSIKGYAGEDPTPALEGADVVLISAGVARKPGMDRADLFNVNAGIVKSLAERIAVVCPNACIGIITNPVNTTVPIAAEVLKKAGVYDKRKLFGVTTLDVIRSETFVAELKGQDPGEVRVPVIGGHSGVTILPLLSQVEGVEFSDEEIAALTKRIQNAGTEVVEAKAGGGSATLSMGQAACRFGLALVKALQGEEVIEYAYVEGNGEHASFFAQPVKLGKEGVEEILPYGELSDFEKAALDGMLETLNSDIQIGVDFVK</sequence>
<proteinExistence type="evidence at protein level"/>
<accession>Q8DEC2</accession>
<name>MDH_VIBVU</name>
<gene>
    <name evidence="1" type="primary">mdh</name>
    <name type="ordered locus">VV1_0673</name>
</gene>
<organism>
    <name type="scientific">Vibrio vulnificus (strain CMCP6)</name>
    <dbReference type="NCBI Taxonomy" id="216895"/>
    <lineage>
        <taxon>Bacteria</taxon>
        <taxon>Pseudomonadati</taxon>
        <taxon>Pseudomonadota</taxon>
        <taxon>Gammaproteobacteria</taxon>
        <taxon>Vibrionales</taxon>
        <taxon>Vibrionaceae</taxon>
        <taxon>Vibrio</taxon>
    </lineage>
</organism>
<reference key="1">
    <citation type="submission" date="2002-12" db="EMBL/GenBank/DDBJ databases">
        <title>Complete genome sequence of Vibrio vulnificus CMCP6.</title>
        <authorList>
            <person name="Rhee J.H."/>
            <person name="Kim S.Y."/>
            <person name="Chung S.S."/>
            <person name="Kim J.J."/>
            <person name="Moon Y.H."/>
            <person name="Jeong H."/>
            <person name="Choy H.E."/>
        </authorList>
    </citation>
    <scope>NUCLEOTIDE SEQUENCE [LARGE SCALE GENOMIC DNA]</scope>
    <source>
        <strain>CMCP6</strain>
    </source>
</reference>
<protein>
    <recommendedName>
        <fullName evidence="1">Malate dehydrogenase</fullName>
        <ecNumber evidence="1">1.1.1.37</ecNumber>
    </recommendedName>
</protein>
<comment type="function">
    <text evidence="1">Catalyzes the reversible oxidation of malate to oxaloacetate.</text>
</comment>
<comment type="catalytic activity">
    <reaction evidence="1">
        <text>(S)-malate + NAD(+) = oxaloacetate + NADH + H(+)</text>
        <dbReference type="Rhea" id="RHEA:21432"/>
        <dbReference type="ChEBI" id="CHEBI:15378"/>
        <dbReference type="ChEBI" id="CHEBI:15589"/>
        <dbReference type="ChEBI" id="CHEBI:16452"/>
        <dbReference type="ChEBI" id="CHEBI:57540"/>
        <dbReference type="ChEBI" id="CHEBI:57945"/>
        <dbReference type="EC" id="1.1.1.37"/>
    </reaction>
</comment>
<comment type="subunit">
    <text evidence="1">Homodimer.</text>
</comment>
<comment type="similarity">
    <text evidence="1">Belongs to the LDH/MDH superfamily. MDH type 1 family.</text>
</comment>
<evidence type="ECO:0000255" key="1">
    <source>
        <dbReference type="HAMAP-Rule" id="MF_01516"/>
    </source>
</evidence>
<evidence type="ECO:0007829" key="2">
    <source>
        <dbReference type="PDB" id="4E0B"/>
    </source>
</evidence>
<dbReference type="EC" id="1.1.1.37" evidence="1"/>
<dbReference type="EMBL" id="AE016795">
    <property type="protein sequence ID" value="AAO09185.1"/>
    <property type="molecule type" value="Genomic_DNA"/>
</dbReference>
<dbReference type="RefSeq" id="WP_011078751.1">
    <property type="nucleotide sequence ID" value="NC_004459.3"/>
</dbReference>
<dbReference type="PDB" id="4E0B">
    <property type="method" value="X-ray"/>
    <property type="resolution" value="2.17 A"/>
    <property type="chains" value="A/B/C/D=1-310"/>
</dbReference>
<dbReference type="PDBsum" id="4E0B"/>
<dbReference type="SMR" id="Q8DEC2"/>
<dbReference type="KEGG" id="vvu:VV1_0673"/>
<dbReference type="HOGENOM" id="CLU_047181_1_0_6"/>
<dbReference type="EvolutionaryTrace" id="Q8DEC2"/>
<dbReference type="Proteomes" id="UP000002275">
    <property type="component" value="Chromosome 1"/>
</dbReference>
<dbReference type="GO" id="GO:0005737">
    <property type="term" value="C:cytoplasm"/>
    <property type="evidence" value="ECO:0007669"/>
    <property type="project" value="TreeGrafter"/>
</dbReference>
<dbReference type="GO" id="GO:0030060">
    <property type="term" value="F:L-malate dehydrogenase (NAD+) activity"/>
    <property type="evidence" value="ECO:0007669"/>
    <property type="project" value="UniProtKB-UniRule"/>
</dbReference>
<dbReference type="GO" id="GO:0006108">
    <property type="term" value="P:malate metabolic process"/>
    <property type="evidence" value="ECO:0007669"/>
    <property type="project" value="InterPro"/>
</dbReference>
<dbReference type="GO" id="GO:0006099">
    <property type="term" value="P:tricarboxylic acid cycle"/>
    <property type="evidence" value="ECO:0007669"/>
    <property type="project" value="UniProtKB-UniRule"/>
</dbReference>
<dbReference type="CDD" id="cd01337">
    <property type="entry name" value="MDH_glyoxysomal_mitochondrial"/>
    <property type="match status" value="1"/>
</dbReference>
<dbReference type="FunFam" id="3.40.50.720:FF:000017">
    <property type="entry name" value="Malate dehydrogenase"/>
    <property type="match status" value="1"/>
</dbReference>
<dbReference type="FunFam" id="3.90.110.10:FF:000001">
    <property type="entry name" value="Malate dehydrogenase"/>
    <property type="match status" value="1"/>
</dbReference>
<dbReference type="Gene3D" id="3.90.110.10">
    <property type="entry name" value="Lactate dehydrogenase/glycoside hydrolase, family 4, C-terminal"/>
    <property type="match status" value="1"/>
</dbReference>
<dbReference type="Gene3D" id="3.40.50.720">
    <property type="entry name" value="NAD(P)-binding Rossmann-like Domain"/>
    <property type="match status" value="1"/>
</dbReference>
<dbReference type="HAMAP" id="MF_01516">
    <property type="entry name" value="Malate_dehydrog_1"/>
    <property type="match status" value="1"/>
</dbReference>
<dbReference type="InterPro" id="IPR001557">
    <property type="entry name" value="L-lactate/malate_DH"/>
</dbReference>
<dbReference type="InterPro" id="IPR022383">
    <property type="entry name" value="Lactate/malate_DH_C"/>
</dbReference>
<dbReference type="InterPro" id="IPR001236">
    <property type="entry name" value="Lactate/malate_DH_N"/>
</dbReference>
<dbReference type="InterPro" id="IPR015955">
    <property type="entry name" value="Lactate_DH/Glyco_Ohase_4_C"/>
</dbReference>
<dbReference type="InterPro" id="IPR001252">
    <property type="entry name" value="Malate_DH_AS"/>
</dbReference>
<dbReference type="InterPro" id="IPR010097">
    <property type="entry name" value="Malate_DH_type1"/>
</dbReference>
<dbReference type="InterPro" id="IPR023958">
    <property type="entry name" value="Malate_DH_type1_bac"/>
</dbReference>
<dbReference type="InterPro" id="IPR036291">
    <property type="entry name" value="NAD(P)-bd_dom_sf"/>
</dbReference>
<dbReference type="NCBIfam" id="TIGR01772">
    <property type="entry name" value="MDH_euk_gproteo"/>
    <property type="match status" value="1"/>
</dbReference>
<dbReference type="PANTHER" id="PTHR11540">
    <property type="entry name" value="MALATE AND LACTATE DEHYDROGENASE"/>
    <property type="match status" value="1"/>
</dbReference>
<dbReference type="PANTHER" id="PTHR11540:SF16">
    <property type="entry name" value="MALATE DEHYDROGENASE, MITOCHONDRIAL"/>
    <property type="match status" value="1"/>
</dbReference>
<dbReference type="Pfam" id="PF02866">
    <property type="entry name" value="Ldh_1_C"/>
    <property type="match status" value="1"/>
</dbReference>
<dbReference type="Pfam" id="PF00056">
    <property type="entry name" value="Ldh_1_N"/>
    <property type="match status" value="1"/>
</dbReference>
<dbReference type="PIRSF" id="PIRSF000102">
    <property type="entry name" value="Lac_mal_DH"/>
    <property type="match status" value="1"/>
</dbReference>
<dbReference type="SUPFAM" id="SSF56327">
    <property type="entry name" value="LDH C-terminal domain-like"/>
    <property type="match status" value="1"/>
</dbReference>
<dbReference type="SUPFAM" id="SSF51735">
    <property type="entry name" value="NAD(P)-binding Rossmann-fold domains"/>
    <property type="match status" value="1"/>
</dbReference>
<dbReference type="PROSITE" id="PS00068">
    <property type="entry name" value="MDH"/>
    <property type="match status" value="1"/>
</dbReference>
<keyword id="KW-0002">3D-structure</keyword>
<keyword id="KW-0520">NAD</keyword>
<keyword id="KW-0560">Oxidoreductase</keyword>
<keyword id="KW-0816">Tricarboxylic acid cycle</keyword>